<dbReference type="EMBL" id="AJ567472">
    <property type="protein sequence ID" value="CAD98940.1"/>
    <property type="molecule type" value="Genomic_DNA"/>
</dbReference>
<dbReference type="RefSeq" id="YP_003736.1">
    <property type="nucleotide sequence ID" value="NC_005830.1"/>
</dbReference>
<dbReference type="SMR" id="Q70LE0"/>
<dbReference type="KEGG" id="vg:2769171"/>
<dbReference type="Proteomes" id="UP000000514">
    <property type="component" value="Genome"/>
</dbReference>
<proteinExistence type="predicted"/>
<gene>
    <name type="ORF">ORF166</name>
</gene>
<organismHost>
    <name type="scientific">Acidianus hospitalis</name>
    <dbReference type="NCBI Taxonomy" id="563177"/>
</organismHost>
<organismHost>
    <name type="scientific">Acidianus infernus</name>
    <dbReference type="NCBI Taxonomy" id="12915"/>
</organismHost>
<accession>Q70LE0</accession>
<protein>
    <recommendedName>
        <fullName>Uncharacterized protein ORF166</fullName>
    </recommendedName>
</protein>
<reference key="1">
    <citation type="journal article" date="2003" name="Virology">
        <title>AFV1, a novel virus infecting hyperthermophilic archaea of the genus acidianus.</title>
        <authorList>
            <person name="Bettstetter M."/>
            <person name="Peng X."/>
            <person name="Garrett R.A."/>
            <person name="Prangishvili D."/>
        </authorList>
    </citation>
    <scope>NUCLEOTIDE SEQUENCE [GENOMIC DNA]</scope>
</reference>
<name>Y166_AFV1Y</name>
<keyword id="KW-1185">Reference proteome</keyword>
<feature type="chain" id="PRO_0000384563" description="Uncharacterized protein ORF166">
    <location>
        <begin position="1"/>
        <end position="166"/>
    </location>
</feature>
<sequence>MANFFRTAKALIIIPDDIPGRLVIFKLHGRLVYRYQTIRRIITKTGREAYVYRFARLPCTKKPNEPDFQICIISELEYCEPEIGGRRNKHPLSFRYTSCQPFYLKDYDSLDSLYKAMDSTLDSLIIEYSDFISGFGESVEDLAHESTQINVCNLLTDEEEISHDYC</sequence>
<organism>
    <name type="scientific">Acidianus filamentous virus 1 (isolate United States/Yellowstone)</name>
    <name type="common">AFV-1</name>
    <dbReference type="NCBI Taxonomy" id="654909"/>
    <lineage>
        <taxon>Viruses</taxon>
        <taxon>Adnaviria</taxon>
        <taxon>Zilligvirae</taxon>
        <taxon>Taleaviricota</taxon>
        <taxon>Tokiviricetes</taxon>
        <taxon>Ligamenvirales</taxon>
        <taxon>Ungulaviridae</taxon>
        <taxon>Captovirus</taxon>
        <taxon>Acidianus filamentous virus 1</taxon>
    </lineage>
</organism>